<evidence type="ECO:0000255" key="1">
    <source>
        <dbReference type="HAMAP-Rule" id="MF_01384"/>
    </source>
</evidence>
<evidence type="ECO:0000305" key="2"/>
<sequence>MNRIQQTFQTSSAPFWYAQLELGFCYENSRTIMSHRKHYGPVRVQKMLWPEKTGVCHAIIVHPPAGIAGGDHLTFQIETEGQAHAVITTPGAGKWYRTNGKQAFQHIYLNVKDDSILEWMPQETMLFDGALAHSETDIHLEQTASFIGWDMLVLGRQARAENFVQGSYHNQFKLWRKNKLLVADTLYFEGGDRWLSSCLGMNNQAVMASFWAVPPEKFRSSFYLEQHIELIRELIMRMDVPVTLTLLEDVLCARFLGNDVRRCHDAFAAIRAKLRRYWFDLDEEFPRIWKT</sequence>
<feature type="chain" id="PRO_0000340399" description="Urease accessory protein UreD">
    <location>
        <begin position="1"/>
        <end position="291"/>
    </location>
</feature>
<comment type="function">
    <text evidence="1">Required for maturation of urease via the functional incorporation of the urease nickel metallocenter.</text>
</comment>
<comment type="subunit">
    <text evidence="1">UreD, UreF and UreG form a complex that acts as a GTP-hydrolysis-dependent molecular chaperone, activating the urease apoprotein by helping to assemble the nickel containing metallocenter of UreC. The UreE protein probably delivers the nickel.</text>
</comment>
<comment type="subcellular location">
    <subcellularLocation>
        <location evidence="1">Cytoplasm</location>
    </subcellularLocation>
</comment>
<comment type="similarity">
    <text evidence="1">Belongs to the UreD family.</text>
</comment>
<comment type="sequence caution" evidence="2">
    <conflict type="erroneous initiation">
        <sequence resource="EMBL-CDS" id="ABO11443"/>
    </conflict>
</comment>
<name>URED_ACIBT</name>
<protein>
    <recommendedName>
        <fullName evidence="1">Urease accessory protein UreD</fullName>
    </recommendedName>
</protein>
<accession>A3M3E9</accession>
<reference key="1">
    <citation type="journal article" date="2007" name="Genes Dev.">
        <title>New insights into Acinetobacter baumannii pathogenesis revealed by high-density pyrosequencing and transposon mutagenesis.</title>
        <authorList>
            <person name="Smith M.G."/>
            <person name="Gianoulis T.A."/>
            <person name="Pukatzki S."/>
            <person name="Mekalanos J.J."/>
            <person name="Ornston L.N."/>
            <person name="Gerstein M."/>
            <person name="Snyder M."/>
        </authorList>
    </citation>
    <scope>NUCLEOTIDE SEQUENCE [LARGE SCALE GENOMIC DNA]</scope>
    <source>
        <strain>ATCC 17978 / DSM 105126 / CIP 53.77 / LMG 1025 / NCDC KC755 / 5377</strain>
    </source>
</reference>
<dbReference type="EMBL" id="CP000521">
    <property type="protein sequence ID" value="ABO11443.2"/>
    <property type="status" value="ALT_INIT"/>
    <property type="molecule type" value="Genomic_DNA"/>
</dbReference>
<dbReference type="RefSeq" id="WP_001079965.1">
    <property type="nucleotide sequence ID" value="NZ_CP053098.1"/>
</dbReference>
<dbReference type="SMR" id="A3M3E9"/>
<dbReference type="KEGG" id="acb:A1S_1011"/>
<dbReference type="HOGENOM" id="CLU_056339_0_0_6"/>
<dbReference type="GO" id="GO:0005737">
    <property type="term" value="C:cytoplasm"/>
    <property type="evidence" value="ECO:0007669"/>
    <property type="project" value="UniProtKB-SubCell"/>
</dbReference>
<dbReference type="GO" id="GO:0016151">
    <property type="term" value="F:nickel cation binding"/>
    <property type="evidence" value="ECO:0007669"/>
    <property type="project" value="UniProtKB-UniRule"/>
</dbReference>
<dbReference type="HAMAP" id="MF_01384">
    <property type="entry name" value="UreD"/>
    <property type="match status" value="1"/>
</dbReference>
<dbReference type="InterPro" id="IPR002669">
    <property type="entry name" value="UreD"/>
</dbReference>
<dbReference type="PANTHER" id="PTHR33643">
    <property type="entry name" value="UREASE ACCESSORY PROTEIN D"/>
    <property type="match status" value="1"/>
</dbReference>
<dbReference type="PANTHER" id="PTHR33643:SF1">
    <property type="entry name" value="UREASE ACCESSORY PROTEIN D"/>
    <property type="match status" value="1"/>
</dbReference>
<dbReference type="Pfam" id="PF01774">
    <property type="entry name" value="UreD"/>
    <property type="match status" value="1"/>
</dbReference>
<gene>
    <name evidence="1" type="primary">ureD</name>
    <name type="ordered locus">A1S_1011</name>
</gene>
<organism>
    <name type="scientific">Acinetobacter baumannii (strain ATCC 17978 / DSM 105126 / CIP 53.77 / LMG 1025 / NCDC KC755 / 5377)</name>
    <dbReference type="NCBI Taxonomy" id="400667"/>
    <lineage>
        <taxon>Bacteria</taxon>
        <taxon>Pseudomonadati</taxon>
        <taxon>Pseudomonadota</taxon>
        <taxon>Gammaproteobacteria</taxon>
        <taxon>Moraxellales</taxon>
        <taxon>Moraxellaceae</taxon>
        <taxon>Acinetobacter</taxon>
        <taxon>Acinetobacter calcoaceticus/baumannii complex</taxon>
    </lineage>
</organism>
<proteinExistence type="inferred from homology"/>
<keyword id="KW-0143">Chaperone</keyword>
<keyword id="KW-0963">Cytoplasm</keyword>
<keyword id="KW-0996">Nickel insertion</keyword>